<proteinExistence type="evidence at protein level"/>
<feature type="signal peptide" evidence="1">
    <location>
        <begin position="1"/>
        <end position="12"/>
    </location>
</feature>
<feature type="chain" id="PRO_0000458490" description="Ferric aerobactin-binding protein VatD" evidence="1">
    <location>
        <begin position="13"/>
        <end position="292"/>
    </location>
</feature>
<feature type="domain" description="Fe/B12 periplasmic-binding" evidence="2">
    <location>
        <begin position="30"/>
        <end position="292"/>
    </location>
</feature>
<feature type="binding site" evidence="6 14">
    <location>
        <position position="61"/>
    </location>
    <ligand>
        <name>desferrioxamine B</name>
        <dbReference type="ChEBI" id="CHEBI:195191"/>
    </ligand>
</feature>
<feature type="binding site" evidence="6 14">
    <location>
        <position position="77"/>
    </location>
    <ligand>
        <name>desferrioxamine B</name>
        <dbReference type="ChEBI" id="CHEBI:195191"/>
    </ligand>
</feature>
<feature type="binding site" evidence="6 14">
    <location>
        <position position="118"/>
    </location>
    <ligand>
        <name>desferrioxamine B</name>
        <dbReference type="ChEBI" id="CHEBI:195191"/>
    </ligand>
</feature>
<feature type="binding site" evidence="6 14">
    <location>
        <position position="185"/>
    </location>
    <ligand>
        <name>desferrioxamine B</name>
        <dbReference type="ChEBI" id="CHEBI:195191"/>
    </ligand>
</feature>
<feature type="binding site" evidence="6 14">
    <location>
        <position position="213"/>
    </location>
    <ligand>
        <name>desferrioxamine B</name>
        <dbReference type="ChEBI" id="CHEBI:195191"/>
    </ligand>
</feature>
<feature type="binding site" evidence="6 14">
    <location>
        <position position="215"/>
    </location>
    <ligand>
        <name>desferrioxamine B</name>
        <dbReference type="ChEBI" id="CHEBI:195191"/>
    </ligand>
</feature>
<feature type="binding site" evidence="6 14">
    <location>
        <position position="269"/>
    </location>
    <ligand>
        <name>desferrioxamine B</name>
        <dbReference type="ChEBI" id="CHEBI:195191"/>
    </ligand>
</feature>
<feature type="binding site" evidence="6 14">
    <location>
        <position position="271"/>
    </location>
    <ligand>
        <name>desferrioxamine B</name>
        <dbReference type="ChEBI" id="CHEBI:195191"/>
    </ligand>
</feature>
<feature type="strand" evidence="15">
    <location>
        <begin position="14"/>
        <end position="17"/>
    </location>
</feature>
<feature type="strand" evidence="15">
    <location>
        <begin position="20"/>
        <end position="23"/>
    </location>
</feature>
<feature type="strand" evidence="15">
    <location>
        <begin position="30"/>
        <end position="35"/>
    </location>
</feature>
<feature type="helix" evidence="15">
    <location>
        <begin position="36"/>
        <end position="44"/>
    </location>
</feature>
<feature type="strand" evidence="15">
    <location>
        <begin position="50"/>
        <end position="53"/>
    </location>
</feature>
<feature type="helix" evidence="15">
    <location>
        <begin position="55"/>
        <end position="61"/>
    </location>
</feature>
<feature type="strand" evidence="15">
    <location>
        <begin position="77"/>
        <end position="80"/>
    </location>
</feature>
<feature type="helix" evidence="15">
    <location>
        <begin position="82"/>
        <end position="88"/>
    </location>
</feature>
<feature type="strand" evidence="15">
    <location>
        <begin position="91"/>
        <end position="95"/>
    </location>
</feature>
<feature type="helix" evidence="15">
    <location>
        <begin position="97"/>
        <end position="102"/>
    </location>
</feature>
<feature type="helix" evidence="15">
    <location>
        <begin position="103"/>
        <end position="107"/>
    </location>
</feature>
<feature type="strand" evidence="15">
    <location>
        <begin position="112"/>
        <end position="114"/>
    </location>
</feature>
<feature type="strand" evidence="15">
    <location>
        <begin position="117"/>
        <end position="119"/>
    </location>
</feature>
<feature type="helix" evidence="15">
    <location>
        <begin position="124"/>
        <end position="138"/>
    </location>
</feature>
<feature type="helix" evidence="15">
    <location>
        <begin position="142"/>
        <end position="165"/>
    </location>
</feature>
<feature type="strand" evidence="15">
    <location>
        <begin position="169"/>
        <end position="171"/>
    </location>
</feature>
<feature type="strand" evidence="15">
    <location>
        <begin position="173"/>
        <end position="180"/>
    </location>
</feature>
<feature type="strand" evidence="15">
    <location>
        <begin position="183"/>
        <end position="187"/>
    </location>
</feature>
<feature type="helix" evidence="15">
    <location>
        <begin position="192"/>
        <end position="199"/>
    </location>
</feature>
<feature type="strand" evidence="15">
    <location>
        <begin position="214"/>
        <end position="219"/>
    </location>
</feature>
<feature type="helix" evidence="15">
    <location>
        <begin position="220"/>
        <end position="226"/>
    </location>
</feature>
<feature type="strand" evidence="15">
    <location>
        <begin position="229"/>
        <end position="235"/>
    </location>
</feature>
<feature type="helix" evidence="15">
    <location>
        <begin position="239"/>
        <end position="247"/>
    </location>
</feature>
<feature type="helix" evidence="15">
    <location>
        <begin position="249"/>
        <end position="253"/>
    </location>
</feature>
<feature type="helix" evidence="15">
    <location>
        <begin position="255"/>
        <end position="258"/>
    </location>
</feature>
<feature type="strand" evidence="15">
    <location>
        <begin position="262"/>
        <end position="267"/>
    </location>
</feature>
<feature type="helix" evidence="15">
    <location>
        <begin position="274"/>
        <end position="289"/>
    </location>
</feature>
<keyword id="KW-0002">3D-structure</keyword>
<keyword id="KW-0406">Ion transport</keyword>
<keyword id="KW-0408">Iron</keyword>
<keyword id="KW-0410">Iron transport</keyword>
<keyword id="KW-0574">Periplasm</keyword>
<keyword id="KW-0732">Signal</keyword>
<keyword id="KW-0813">Transport</keyword>
<dbReference type="EMBL" id="AB074151">
    <property type="protein sequence ID" value="BAC65321.2"/>
    <property type="molecule type" value="Genomic_DNA"/>
</dbReference>
<dbReference type="PDB" id="7W8F">
    <property type="method" value="X-ray"/>
    <property type="resolution" value="1.90 A"/>
    <property type="chains" value="A=14-292"/>
</dbReference>
<dbReference type="PDBsum" id="7W8F"/>
<dbReference type="SMR" id="Q845T3"/>
<dbReference type="GO" id="GO:0043190">
    <property type="term" value="C:ATP-binding cassette (ABC) transporter complex"/>
    <property type="evidence" value="ECO:0000305"/>
    <property type="project" value="UniProtKB"/>
</dbReference>
<dbReference type="GO" id="GO:0030288">
    <property type="term" value="C:outer membrane-bounded periplasmic space"/>
    <property type="evidence" value="ECO:0007669"/>
    <property type="project" value="TreeGrafter"/>
</dbReference>
<dbReference type="GO" id="GO:0042597">
    <property type="term" value="C:periplasmic space"/>
    <property type="evidence" value="ECO:0000305"/>
    <property type="project" value="UniProtKB"/>
</dbReference>
<dbReference type="GO" id="GO:0019271">
    <property type="term" value="P:aerobactin transport"/>
    <property type="evidence" value="ECO:0000315"/>
    <property type="project" value="UniProtKB"/>
</dbReference>
<dbReference type="GO" id="GO:0015687">
    <property type="term" value="P:ferric-hydroxamate import into cell"/>
    <property type="evidence" value="ECO:0000315"/>
    <property type="project" value="UniProtKB"/>
</dbReference>
<dbReference type="GO" id="GO:0006879">
    <property type="term" value="P:intracellular iron ion homeostasis"/>
    <property type="evidence" value="ECO:0000315"/>
    <property type="project" value="UniProtKB"/>
</dbReference>
<dbReference type="GO" id="GO:0006826">
    <property type="term" value="P:iron ion transport"/>
    <property type="evidence" value="ECO:0000315"/>
    <property type="project" value="UniProtKB"/>
</dbReference>
<dbReference type="GO" id="GO:0044718">
    <property type="term" value="P:siderophore transmembrane transport"/>
    <property type="evidence" value="ECO:0000315"/>
    <property type="project" value="UniProtKB"/>
</dbReference>
<dbReference type="CDD" id="cd01146">
    <property type="entry name" value="FhuD"/>
    <property type="match status" value="1"/>
</dbReference>
<dbReference type="Gene3D" id="3.40.50.1980">
    <property type="entry name" value="Nitrogenase molybdenum iron protein domain"/>
    <property type="match status" value="2"/>
</dbReference>
<dbReference type="InterPro" id="IPR002491">
    <property type="entry name" value="ABC_transptr_periplasmic_BD"/>
</dbReference>
<dbReference type="InterPro" id="IPR051313">
    <property type="entry name" value="Bact_iron-sidero_bind"/>
</dbReference>
<dbReference type="PANTHER" id="PTHR30532">
    <property type="entry name" value="IRON III DICITRATE-BINDING PERIPLASMIC PROTEIN"/>
    <property type="match status" value="1"/>
</dbReference>
<dbReference type="PANTHER" id="PTHR30532:SF1">
    <property type="entry name" value="IRON(3+)-HYDROXAMATE-BINDING PROTEIN FHUD"/>
    <property type="match status" value="1"/>
</dbReference>
<dbReference type="Pfam" id="PF01497">
    <property type="entry name" value="Peripla_BP_2"/>
    <property type="match status" value="1"/>
</dbReference>
<dbReference type="PRINTS" id="PR01715">
    <property type="entry name" value="FERRIBNDNGPP"/>
</dbReference>
<dbReference type="SUPFAM" id="SSF53807">
    <property type="entry name" value="Helical backbone' metal receptor"/>
    <property type="match status" value="1"/>
</dbReference>
<dbReference type="PROSITE" id="PS50983">
    <property type="entry name" value="FE_B12_PBP"/>
    <property type="match status" value="1"/>
</dbReference>
<evidence type="ECO:0000255" key="1"/>
<evidence type="ECO:0000255" key="2">
    <source>
        <dbReference type="PROSITE-ProRule" id="PRU00344"/>
    </source>
</evidence>
<evidence type="ECO:0000269" key="3">
    <source>
    </source>
</evidence>
<evidence type="ECO:0000269" key="4">
    <source>
    </source>
</evidence>
<evidence type="ECO:0000269" key="5">
    <source>
    </source>
</evidence>
<evidence type="ECO:0000269" key="6">
    <source ref="5"/>
</evidence>
<evidence type="ECO:0000303" key="7">
    <source>
    </source>
</evidence>
<evidence type="ECO:0000303" key="8">
    <source>
    </source>
</evidence>
<evidence type="ECO:0000303" key="9">
    <source>
    </source>
</evidence>
<evidence type="ECO:0000303" key="10">
    <source>
    </source>
</evidence>
<evidence type="ECO:0000303" key="11">
    <source ref="5"/>
</evidence>
<evidence type="ECO:0000305" key="12"/>
<evidence type="ECO:0000312" key="13">
    <source>
        <dbReference type="EMBL" id="BAC65321.2"/>
    </source>
</evidence>
<evidence type="ECO:0007744" key="14">
    <source>
        <dbReference type="PDB" id="7W8F"/>
    </source>
</evidence>
<evidence type="ECO:0007829" key="15">
    <source>
        <dbReference type="PDB" id="7W8F"/>
    </source>
</evidence>
<sequence>MLSAALAFNSYALDITHEMGTTSFETTPKKVVALDWVLTETVLSLGIELEGAANISGYQQWVAEPHLNADAIDVGSRREPNLELLSNIKPDVILISKHLAAAYEPLSKIAPVLVYSVYSEDKQPLESAKRITRSLGKLFDKEQQAEQVIAQTDQRLAANGAKITSAGKAEKPLLFARFINDKTLRIHSEGSLAQDTINAMGLKNDWQEPTNLWGFTTTGTEKLAEHQKANVMIFGPLSQEERQQLTQSPLWQAMEFSRTDSVYELPAIWTFGGLLAAQRLSDHITGRLTQPQ</sequence>
<accession>Q845T3</accession>
<reference evidence="13" key="1">
    <citation type="journal article" date="2005" name="Microbiol. Immunol.">
        <title>A novel aerobactin utilization cluster in Vibrio vulnificus with a gene involved in the transcription regulation of the iutA homologue.</title>
        <authorList>
            <person name="Tanabe T."/>
            <person name="Naka A."/>
            <person name="Aso H."/>
            <person name="Nakao H."/>
            <person name="Narimatsu S."/>
            <person name="Inoue Y."/>
            <person name="Ono T."/>
            <person name="Yamamoto S."/>
        </authorList>
    </citation>
    <scope>NUCLEOTIDE SEQUENCE [GENOMIC DNA]</scope>
    <scope>FUNCTION</scope>
    <scope>DISRUPTION PHENOTYPE</scope>
    <source>
        <strain evidence="7 13">M2799</strain>
    </source>
</reference>
<reference key="2">
    <citation type="journal article" date="2009" name="Microb. Pathog.">
        <title>Proteomic analysis of Vibrio vulnificus M2799 grown under iron-repleted and iron-depleted conditions.</title>
        <authorList>
            <person name="Miyamoto K."/>
            <person name="Kosakai K."/>
            <person name="Ikebayashi S."/>
            <person name="Tsuchiya T."/>
            <person name="Yamamoto S."/>
            <person name="Tsujibo H."/>
        </authorList>
    </citation>
    <scope>INDUCTION</scope>
    <scope>IDENTIFICATION BY MASS SPECTROMETRY</scope>
    <source>
        <strain evidence="8">M2799</strain>
    </source>
</reference>
<reference key="3">
    <citation type="journal article" date="2013" name="Microb. Pathog.">
        <title>Role of periplasmic binding proteins, FatB and VatD, in the vulnibactin utilization system of Vibrio vulnificus M2799.</title>
        <authorList>
            <person name="Kawano H."/>
            <person name="Miyamoto K."/>
            <person name="Sakaguchi I."/>
            <person name="Myojin T."/>
            <person name="Moriwaki M."/>
            <person name="Tsuchiya T."/>
            <person name="Tanabe T."/>
            <person name="Yamamoto S."/>
            <person name="Tsujibo H."/>
        </authorList>
    </citation>
    <scope>FUNCTION</scope>
    <scope>INDUCTION</scope>
    <scope>DISRUPTION PHENOTYPE</scope>
    <source>
        <strain evidence="9">M2799</strain>
    </source>
</reference>
<reference key="4">
    <citation type="journal article" date="2015" name="Acta Crystallogr. F Struct. Biol. Commun.">
        <title>Expression, purification, crystallization and X-ray crystallographic analysis of the periplasmic binding protein VatD from Vibrio vulnificus M2799.</title>
        <authorList>
            <person name="Miyano N."/>
            <person name="Igarashi T."/>
            <person name="Kawano H."/>
            <person name="Miyamoto K."/>
            <person name="Tsuchiya T."/>
            <person name="Tomoo K."/>
            <person name="Tsujibo H."/>
        </authorList>
    </citation>
    <scope>CRYSTALLIZATION OF 14-292 UNCOMPLEXED AND IN COMPLEX WITH IRON(3+)-DESFERRIOXAMINE B</scope>
    <source>
        <strain evidence="10">M2799</strain>
    </source>
</reference>
<reference evidence="14" key="5">
    <citation type="submission" date="2021-12" db="PDB data bank">
        <title>Crystal structure of siderophore binding protein VatD from Vibrio vulnificus M2799 complexed with Desferal.</title>
        <authorList>
            <person name="Tomoo K."/>
            <person name="Miyamoto K."/>
        </authorList>
    </citation>
    <scope>X-RAY CRYSTALLOGRAPHY (1.90 ANGSTROMS) OF 14-292 IN COMPLEX WITH DESFERRIOXAMINE B; IRON AND MAGNESIUM</scope>
    <source>
        <strain evidence="11">M2799</strain>
    </source>
</reference>
<gene>
    <name evidence="7 8 9 10" type="primary">vatD</name>
    <name evidence="13" type="synonym">fhuD</name>
</gene>
<name>VATD_VIBVL</name>
<comment type="function">
    <text evidence="3 5">Part of the ABC transporter complex VatCDB involved in the import of iron(3+)-complexed aerobactin, a citrate-hydroxamate siderophore produced by other bacteria. Binds the iron(3+)-aerobactin complex and transfers it to the membrane-bound permease (PubMed:16172537). Functions in the import of iron(3+)-complexed vulnibactin, a catecholate siderophore synthesized by V.vulnificus, in the absence of FatB (PubMed:24135791).</text>
</comment>
<comment type="subunit">
    <text evidence="12">The complex is composed of two ATP-binding proteins (VatC), two transmembrane proteins (VatB) and a solute-binding protein (VatD) (Probable).</text>
</comment>
<comment type="subcellular location">
    <subcellularLocation>
        <location evidence="12">Periplasm</location>
    </subcellularLocation>
</comment>
<comment type="induction">
    <text evidence="4 5">Expression is up-regulated by low iron concentration condition from early to mid logarithmic growth phase. Expression is repressed by Fur under iron-repleted condition.</text>
</comment>
<comment type="disruption phenotype">
    <text evidence="3 5">Impaired ability to utilize aerobactin as a heterologous siderophore (PubMed:16172537). No effect on growth. VatD/fatB double deletion mutant shows significantly greater growth impairment than single fatB mutant under low-iron concentration condition (PubMed:24135791).</text>
</comment>
<comment type="similarity">
    <text evidence="12">Belongs to the bacterial solute-binding protein 8 family.</text>
</comment>
<protein>
    <recommendedName>
        <fullName evidence="9">Ferric aerobactin-binding protein VatD</fullName>
    </recommendedName>
    <alternativeName>
        <fullName evidence="12">Iron(3+)-hydroxamate-binding protein VatD</fullName>
    </alternativeName>
    <alternativeName>
        <fullName evidence="7 9 10">Periplasmic-binding protein VatD</fullName>
        <shortName evidence="9">PBP VatD</shortName>
    </alternativeName>
    <alternativeName>
        <fullName evidence="7">Vulnificus aerobactin transport protein D</fullName>
    </alternativeName>
</protein>
<organism evidence="13">
    <name type="scientific">Vibrio vulnificus</name>
    <dbReference type="NCBI Taxonomy" id="672"/>
    <lineage>
        <taxon>Bacteria</taxon>
        <taxon>Pseudomonadati</taxon>
        <taxon>Pseudomonadota</taxon>
        <taxon>Gammaproteobacteria</taxon>
        <taxon>Vibrionales</taxon>
        <taxon>Vibrionaceae</taxon>
        <taxon>Vibrio</taxon>
    </lineage>
</organism>